<accession>Q08301</accession>
<sequence length="429" mass="48062">MALRVTRNTKLNTENKAKVSMTGAKRVPVAIAAASKPGLRPRTALGDIGNKVSEQAQARVPLKKELKTSVTGKVSAKIPPPKPQEKVPVSEPEVELAEPEPEPEPVMEEKLSPEPILVDNPSPSPMETSGCAPAEEYLCQAFSDVILAVSDVDADDGADPNLCSEYVKDIYAYLRQLEEEQSVRPRYLLGREVTGNMRAILIDWLIQVQMKFRLLQETMYMTVSIIDRFMQDNCVPKKMLQLVGVTAMFIASKYEEMYPPEIGDFAFVTNNTYTKHQIRQMEMKILRVLNFSLGRPLPLHFLRRASKIGEVDVEQHTLAKYLMELTMLDYDMVHFAPSQIAAGAFCLALKILDNGEWTPTLQHYLSYTEESLLPVMQHLAKNVVMVNRGLTKHMTIKNKYATSKHAKISTLAQLNCTLVQNLSKAVSKA</sequence>
<protein>
    <recommendedName>
        <fullName>G2/mitotic-specific cyclin-B1</fullName>
    </recommendedName>
</protein>
<name>CCNB1_CRIGR</name>
<dbReference type="EMBL" id="X64588">
    <property type="protein sequence ID" value="CAA45876.1"/>
    <property type="molecule type" value="mRNA"/>
</dbReference>
<dbReference type="PIR" id="S34224">
    <property type="entry name" value="S34224"/>
</dbReference>
<dbReference type="RefSeq" id="XP_003506318.3">
    <property type="nucleotide sequence ID" value="XM_003506270.3"/>
</dbReference>
<dbReference type="SMR" id="Q08301"/>
<dbReference type="PaxDb" id="10029-XP_007623068.1"/>
<dbReference type="Ensembl" id="ENSCGRT00001003708.1">
    <property type="protein sequence ID" value="ENSCGRP00001002713.1"/>
    <property type="gene ID" value="ENSCGRG00001003079.1"/>
</dbReference>
<dbReference type="GeneID" id="100770842"/>
<dbReference type="CTD" id="891"/>
<dbReference type="eggNOG" id="KOG0653">
    <property type="taxonomic scope" value="Eukaryota"/>
</dbReference>
<dbReference type="GeneTree" id="ENSGT00940000154586"/>
<dbReference type="OMA" id="QDCMLHM"/>
<dbReference type="OrthoDB" id="5590282at2759"/>
<dbReference type="Proteomes" id="UP000694386">
    <property type="component" value="Unplaced"/>
</dbReference>
<dbReference type="Proteomes" id="UP001108280">
    <property type="component" value="Unplaced"/>
</dbReference>
<dbReference type="GO" id="GO:0005813">
    <property type="term" value="C:centrosome"/>
    <property type="evidence" value="ECO:0000250"/>
    <property type="project" value="UniProtKB"/>
</dbReference>
<dbReference type="GO" id="GO:0005737">
    <property type="term" value="C:cytoplasm"/>
    <property type="evidence" value="ECO:0000250"/>
    <property type="project" value="UniProtKB"/>
</dbReference>
<dbReference type="GO" id="GO:0005634">
    <property type="term" value="C:nucleus"/>
    <property type="evidence" value="ECO:0000250"/>
    <property type="project" value="UniProtKB"/>
</dbReference>
<dbReference type="GO" id="GO:0016538">
    <property type="term" value="F:cyclin-dependent protein serine/threonine kinase regulator activity"/>
    <property type="evidence" value="ECO:0007669"/>
    <property type="project" value="InterPro"/>
</dbReference>
<dbReference type="GO" id="GO:0051301">
    <property type="term" value="P:cell division"/>
    <property type="evidence" value="ECO:0007669"/>
    <property type="project" value="UniProtKB-KW"/>
</dbReference>
<dbReference type="GO" id="GO:0044772">
    <property type="term" value="P:mitotic cell cycle phase transition"/>
    <property type="evidence" value="ECO:0007669"/>
    <property type="project" value="InterPro"/>
</dbReference>
<dbReference type="CDD" id="cd20565">
    <property type="entry name" value="CYCLIN_CCNB1_rpt1"/>
    <property type="match status" value="1"/>
</dbReference>
<dbReference type="CDD" id="cd20569">
    <property type="entry name" value="CYCLIN_CCNB1_rpt2"/>
    <property type="match status" value="1"/>
</dbReference>
<dbReference type="FunFam" id="1.10.472.10:FF:000027">
    <property type="entry name" value="G2/mitotic-specific cyclin-B1"/>
    <property type="match status" value="1"/>
</dbReference>
<dbReference type="Gene3D" id="1.10.472.10">
    <property type="entry name" value="Cyclin-like"/>
    <property type="match status" value="2"/>
</dbReference>
<dbReference type="InterPro" id="IPR048026">
    <property type="entry name" value="CCNB1_first_cyclin-box"/>
</dbReference>
<dbReference type="InterPro" id="IPR039361">
    <property type="entry name" value="Cyclin"/>
</dbReference>
<dbReference type="InterPro" id="IPR013763">
    <property type="entry name" value="Cyclin-like_dom"/>
</dbReference>
<dbReference type="InterPro" id="IPR036915">
    <property type="entry name" value="Cyclin-like_sf"/>
</dbReference>
<dbReference type="InterPro" id="IPR046965">
    <property type="entry name" value="Cyclin_A/B-like"/>
</dbReference>
<dbReference type="InterPro" id="IPR004367">
    <property type="entry name" value="Cyclin_C-dom"/>
</dbReference>
<dbReference type="InterPro" id="IPR006671">
    <property type="entry name" value="Cyclin_N"/>
</dbReference>
<dbReference type="InterPro" id="IPR048258">
    <property type="entry name" value="Cyclins_cyclin-box"/>
</dbReference>
<dbReference type="PANTHER" id="PTHR10177">
    <property type="entry name" value="CYCLINS"/>
    <property type="match status" value="1"/>
</dbReference>
<dbReference type="Pfam" id="PF02984">
    <property type="entry name" value="Cyclin_C"/>
    <property type="match status" value="1"/>
</dbReference>
<dbReference type="Pfam" id="PF00134">
    <property type="entry name" value="Cyclin_N"/>
    <property type="match status" value="1"/>
</dbReference>
<dbReference type="PIRSF" id="PIRSF001771">
    <property type="entry name" value="Cyclin_A_B_D_E"/>
    <property type="match status" value="1"/>
</dbReference>
<dbReference type="SMART" id="SM00385">
    <property type="entry name" value="CYCLIN"/>
    <property type="match status" value="2"/>
</dbReference>
<dbReference type="SMART" id="SM01332">
    <property type="entry name" value="Cyclin_C"/>
    <property type="match status" value="1"/>
</dbReference>
<dbReference type="SUPFAM" id="SSF47954">
    <property type="entry name" value="Cyclin-like"/>
    <property type="match status" value="2"/>
</dbReference>
<dbReference type="PROSITE" id="PS00292">
    <property type="entry name" value="CYCLINS"/>
    <property type="match status" value="1"/>
</dbReference>
<keyword id="KW-0007">Acetylation</keyword>
<keyword id="KW-0131">Cell cycle</keyword>
<keyword id="KW-0132">Cell division</keyword>
<keyword id="KW-0195">Cyclin</keyword>
<keyword id="KW-0963">Cytoplasm</keyword>
<keyword id="KW-0206">Cytoskeleton</keyword>
<keyword id="KW-0498">Mitosis</keyword>
<keyword id="KW-0539">Nucleus</keyword>
<keyword id="KW-0597">Phosphoprotein</keyword>
<keyword id="KW-0832">Ubl conjugation</keyword>
<evidence type="ECO:0000250" key="1"/>
<evidence type="ECO:0000250" key="2">
    <source>
        <dbReference type="UniProtKB" id="P14635"/>
    </source>
</evidence>
<evidence type="ECO:0000250" key="3">
    <source>
        <dbReference type="UniProtKB" id="P24860"/>
    </source>
</evidence>
<evidence type="ECO:0000256" key="4">
    <source>
        <dbReference type="SAM" id="MobiDB-lite"/>
    </source>
</evidence>
<evidence type="ECO:0000305" key="5"/>
<organism>
    <name type="scientific">Cricetulus griseus</name>
    <name type="common">Chinese hamster</name>
    <name type="synonym">Cricetulus barabensis griseus</name>
    <dbReference type="NCBI Taxonomy" id="10029"/>
    <lineage>
        <taxon>Eukaryota</taxon>
        <taxon>Metazoa</taxon>
        <taxon>Chordata</taxon>
        <taxon>Craniata</taxon>
        <taxon>Vertebrata</taxon>
        <taxon>Euteleostomi</taxon>
        <taxon>Mammalia</taxon>
        <taxon>Eutheria</taxon>
        <taxon>Euarchontoglires</taxon>
        <taxon>Glires</taxon>
        <taxon>Rodentia</taxon>
        <taxon>Myomorpha</taxon>
        <taxon>Muroidea</taxon>
        <taxon>Cricetidae</taxon>
        <taxon>Cricetinae</taxon>
        <taxon>Cricetulus</taxon>
    </lineage>
</organism>
<proteinExistence type="evidence at transcript level"/>
<comment type="function">
    <text>Essential for the control of the cell cycle at the G2/M (mitosis) transition.</text>
</comment>
<comment type="subunit">
    <text evidence="2 3">Interacts with the CDC2 protein kinase to form a serine/threonine kinase holoenzyme complex also known as maturation promoting factor (MPF). The cyclin subunit imparts substrate specificity to the complex. Binds HEI10. Interacts with catalytically active RALBP1 and CDC2 during mitosis to form an endocytotic complex during interphase. Interacts with CCNF; interaction is required for nuclear localization. Interacts with CDK5RAP3. Interacts with RFPL4A and UBE2A. Interacts with INCA1.</text>
</comment>
<comment type="subcellular location">
    <subcellularLocation>
        <location>Cytoplasm</location>
    </subcellularLocation>
    <subcellularLocation>
        <location>Nucleus</location>
    </subcellularLocation>
    <subcellularLocation>
        <location evidence="1">Cytoplasm</location>
        <location evidence="1">Cytoskeleton</location>
        <location evidence="1">Microtubule organizing center</location>
        <location evidence="1">Centrosome</location>
    </subcellularLocation>
</comment>
<comment type="developmental stage">
    <text>Accumulates steadily during G2 and is abruptly destroyed at mitosis.</text>
</comment>
<comment type="PTM">
    <text evidence="1">Ubiquitinated by the SCF(NIPA) complex during interphase, leading to its destruction. Not ubiquitinated during G2/M phases (By similarity).</text>
</comment>
<comment type="PTM">
    <text evidence="1">Phosphorylated by PLK1 at Ser-129 on centrosomes during prophase: phosphorylation by PLK1 does not cause nuclear import. Phosphorylation at Ser-143 was also reported to be mediated by PLK1 but Ser-129 seems to be the primary phosphorylation site (By similarity).</text>
</comment>
<comment type="similarity">
    <text evidence="5">Belongs to the cyclin family. Cyclin AB subfamily.</text>
</comment>
<gene>
    <name type="primary">CCNB1</name>
</gene>
<reference key="1">
    <citation type="journal article" date="1994" name="Int. J. Radiat. Oncol. Biol. Phys.">
        <title>The effects of radiation on the expression of a newly cloned and characterized rat cyclin B mRNA.</title>
        <authorList>
            <person name="Markiewicz D.A."/>
            <person name="McKenna W.G."/>
            <person name="Flick M.B."/>
            <person name="Maity A."/>
            <person name="Muschel R.J."/>
        </authorList>
    </citation>
    <scope>NUCLEOTIDE SEQUENCE [MRNA]</scope>
    <source>
        <tissue>Ovary</tissue>
    </source>
</reference>
<feature type="chain" id="PRO_0000080349" description="G2/mitotic-specific cyclin-B1">
    <location>
        <begin position="1"/>
        <end position="429"/>
    </location>
</feature>
<feature type="region of interest" description="Disordered" evidence="4">
    <location>
        <begin position="1"/>
        <end position="21"/>
    </location>
</feature>
<feature type="region of interest" description="Disordered" evidence="4">
    <location>
        <begin position="71"/>
        <end position="128"/>
    </location>
</feature>
<feature type="region of interest" description="Interaction with CDK2" evidence="1">
    <location>
        <begin position="165"/>
        <end position="173"/>
    </location>
</feature>
<feature type="region of interest" description="Interaction with CDK2" evidence="1">
    <location>
        <begin position="254"/>
        <end position="257"/>
    </location>
</feature>
<feature type="compositionally biased region" description="Polar residues" evidence="4">
    <location>
        <begin position="1"/>
        <end position="14"/>
    </location>
</feature>
<feature type="compositionally biased region" description="Acidic residues" evidence="4">
    <location>
        <begin position="92"/>
        <end position="106"/>
    </location>
</feature>
<feature type="modified residue" description="N6-acetyllysine" evidence="2">
    <location>
        <position position="73"/>
    </location>
</feature>
<feature type="modified residue" description="Phosphoserine; by CDK1" evidence="2">
    <location>
        <position position="122"/>
    </location>
</feature>
<feature type="modified residue" description="Phosphoserine" evidence="2">
    <location>
        <position position="124"/>
    </location>
</feature>
<feature type="modified residue" description="Phosphoserine; by PLK1" evidence="2">
    <location>
        <position position="129"/>
    </location>
</feature>
<feature type="modified residue" description="Phosphoserine" evidence="2">
    <location>
        <position position="143"/>
    </location>
</feature>
<feature type="modified residue" description="Phosphothreonine" evidence="2">
    <location>
        <position position="317"/>
    </location>
</feature>